<comment type="catalytic activity">
    <reaction evidence="1">
        <text>Hydrolysis of terminal, non-reducing beta-D-glucosyl residues with release of beta-D-glucose.</text>
        <dbReference type="EC" id="3.2.1.21"/>
    </reaction>
</comment>
<comment type="similarity">
    <text evidence="8">Belongs to the glycosyl hydrolase 1 family.</text>
</comment>
<organism>
    <name type="scientific">Arabidopsis thaliana</name>
    <name type="common">Mouse-ear cress</name>
    <dbReference type="NCBI Taxonomy" id="3702"/>
    <lineage>
        <taxon>Eukaryota</taxon>
        <taxon>Viridiplantae</taxon>
        <taxon>Streptophyta</taxon>
        <taxon>Embryophyta</taxon>
        <taxon>Tracheophyta</taxon>
        <taxon>Spermatophyta</taxon>
        <taxon>Magnoliopsida</taxon>
        <taxon>eudicotyledons</taxon>
        <taxon>Gunneridae</taxon>
        <taxon>Pentapetalae</taxon>
        <taxon>rosids</taxon>
        <taxon>malvids</taxon>
        <taxon>Brassicales</taxon>
        <taxon>Brassicaceae</taxon>
        <taxon>Camelineae</taxon>
        <taxon>Arabidopsis</taxon>
    </lineage>
</organism>
<gene>
    <name evidence="7" type="primary">BGLU13</name>
    <name evidence="9" type="ordered locus">At5g44640</name>
    <name evidence="10" type="ORF">K15C23.9</name>
</gene>
<reference key="1">
    <citation type="submission" date="1999-02" db="EMBL/GenBank/DDBJ databases">
        <title>Structural analysis of Arabidopsis thaliana chromosome 5. XI.</title>
        <authorList>
            <person name="Kaneko T."/>
            <person name="Katoh T."/>
            <person name="Asamizu E."/>
            <person name="Sato S."/>
            <person name="Nakamura Y."/>
            <person name="Kotani H."/>
            <person name="Tabata S."/>
        </authorList>
    </citation>
    <scope>NUCLEOTIDE SEQUENCE [LARGE SCALE GENOMIC DNA]</scope>
    <source>
        <strain>cv. Columbia</strain>
    </source>
</reference>
<reference key="2">
    <citation type="journal article" date="2017" name="Plant J.">
        <title>Araport11: a complete reannotation of the Arabidopsis thaliana reference genome.</title>
        <authorList>
            <person name="Cheng C.Y."/>
            <person name="Krishnakumar V."/>
            <person name="Chan A.P."/>
            <person name="Thibaud-Nissen F."/>
            <person name="Schobel S."/>
            <person name="Town C.D."/>
        </authorList>
    </citation>
    <scope>GENOME REANNOTATION</scope>
    <source>
        <strain>cv. Columbia</strain>
    </source>
</reference>
<reference key="3">
    <citation type="submission" date="2008-06" db="EMBL/GenBank/DDBJ databases">
        <title>Arabidopsis ORF clones.</title>
        <authorList>
            <person name="De Los Reyes C."/>
            <person name="Quan R."/>
            <person name="Chen H."/>
            <person name="Bautista V.R."/>
            <person name="Kim C.J."/>
            <person name="Ecker J.R."/>
        </authorList>
    </citation>
    <scope>NUCLEOTIDE SEQUENCE [LARGE SCALE MRNA]</scope>
    <source>
        <strain>cv. Columbia</strain>
    </source>
</reference>
<reference key="4">
    <citation type="journal article" date="2004" name="Plant Mol. Biol.">
        <title>Functional genomic analysis of Arabidopsis thaliana glycoside hydrolase family 1.</title>
        <authorList>
            <person name="Xu Z."/>
            <person name="Escamilla-Trevino L.L."/>
            <person name="Zeng L."/>
            <person name="Lalgondar M."/>
            <person name="Bevan D.R."/>
            <person name="Winkel B.S.J."/>
            <person name="Mohamed A."/>
            <person name="Cheng C.-L."/>
            <person name="Shih M.-C."/>
            <person name="Poulton J.E."/>
            <person name="Esen A."/>
        </authorList>
    </citation>
    <scope>GENE FAMILY</scope>
    <scope>NOMENCLATURE</scope>
</reference>
<keyword id="KW-1015">Disulfide bond</keyword>
<keyword id="KW-0325">Glycoprotein</keyword>
<keyword id="KW-0326">Glycosidase</keyword>
<keyword id="KW-0378">Hydrolase</keyword>
<keyword id="KW-1185">Reference proteome</keyword>
<keyword id="KW-0732">Signal</keyword>
<accession>Q9LU02</accession>
<name>BGL13_ARATH</name>
<proteinExistence type="evidence at transcript level"/>
<evidence type="ECO:0000250" key="1">
    <source>
        <dbReference type="UniProtKB" id="O64879"/>
    </source>
</evidence>
<evidence type="ECO:0000250" key="2">
    <source>
        <dbReference type="UniProtKB" id="Q1XH05"/>
    </source>
</evidence>
<evidence type="ECO:0000250" key="3">
    <source>
        <dbReference type="UniProtKB" id="Q7XSK0"/>
    </source>
</evidence>
<evidence type="ECO:0000250" key="4">
    <source>
        <dbReference type="UniProtKB" id="Q9SPP9"/>
    </source>
</evidence>
<evidence type="ECO:0000255" key="5"/>
<evidence type="ECO:0000255" key="6">
    <source>
        <dbReference type="PROSITE-ProRule" id="PRU00498"/>
    </source>
</evidence>
<evidence type="ECO:0000303" key="7">
    <source>
    </source>
</evidence>
<evidence type="ECO:0000305" key="8"/>
<evidence type="ECO:0000312" key="9">
    <source>
        <dbReference type="Araport" id="AT5G44640"/>
    </source>
</evidence>
<evidence type="ECO:0000312" key="10">
    <source>
        <dbReference type="EMBL" id="BAA98117.1"/>
    </source>
</evidence>
<sequence>MRTKYFSLLVFIIVLASNEVIAKKHSSTPKLRRSDFPKDFIFGAATSAYQVEGAAHEDGRGPSIWDTFSEKYPEKIKDGTNGSIASDSYHLYKEDVGLLHQIGFGAYRFSISWSRILPRGNLKGGINQAGIDYYNNLINELLSKGIKPFATIFHWDTPQSLEDAYGGFFGAEIVNDFRDYADICFKNFGDRVKHWMTLNEPLTVVQQGYVAGVMAPGRCSKFTNPNCTAGNGATEPYIVGHNLILAHGEAVKVYREKYKASQKGQVGIALNAGWNLPYTESAEDRLAAARAMAFTFDYFMEPLVTGKYPVDMVNNVKDGRLPTFTAKQSKMLKGSYDFIGINYYSSSYAKDVPCSSENVTLFSDPCASVTGEREGVPIGPKAASDWLLIYPKGIRDLLLYAKYKFKDPVMYITENGRDEASTGKIDLKDSERIDYYAQHLKMVQDAISIGANVKGFFAWSLLDNFEWATGYSVRFGLVYVDFNDGRKRYPKKSAKWFRKLLSEKKRN</sequence>
<dbReference type="EC" id="3.2.1.21" evidence="1"/>
<dbReference type="EMBL" id="AB024024">
    <property type="protein sequence ID" value="BAA98117.1"/>
    <property type="molecule type" value="Genomic_DNA"/>
</dbReference>
<dbReference type="EMBL" id="CP002688">
    <property type="protein sequence ID" value="AED95142.1"/>
    <property type="molecule type" value="Genomic_DNA"/>
</dbReference>
<dbReference type="EMBL" id="BT033043">
    <property type="protein sequence ID" value="ACE79745.1"/>
    <property type="molecule type" value="mRNA"/>
</dbReference>
<dbReference type="RefSeq" id="NP_199277.1">
    <property type="nucleotide sequence ID" value="NM_123831.2"/>
</dbReference>
<dbReference type="SMR" id="Q9LU02"/>
<dbReference type="FunCoup" id="Q9LU02">
    <property type="interactions" value="449"/>
</dbReference>
<dbReference type="STRING" id="3702.Q9LU02"/>
<dbReference type="CAZy" id="GH1">
    <property type="family name" value="Glycoside Hydrolase Family 1"/>
</dbReference>
<dbReference type="GlyCosmos" id="Q9LU02">
    <property type="glycosylation" value="3 sites, No reported glycans"/>
</dbReference>
<dbReference type="GlyGen" id="Q9LU02">
    <property type="glycosylation" value="3 sites"/>
</dbReference>
<dbReference type="PaxDb" id="3702-AT5G44640.1"/>
<dbReference type="ProteomicsDB" id="240785"/>
<dbReference type="EnsemblPlants" id="AT5G44640.1">
    <property type="protein sequence ID" value="AT5G44640.1"/>
    <property type="gene ID" value="AT5G44640"/>
</dbReference>
<dbReference type="GeneID" id="834493"/>
<dbReference type="Gramene" id="AT5G44640.1">
    <property type="protein sequence ID" value="AT5G44640.1"/>
    <property type="gene ID" value="AT5G44640"/>
</dbReference>
<dbReference type="KEGG" id="ath:AT5G44640"/>
<dbReference type="Araport" id="AT5G44640"/>
<dbReference type="TAIR" id="AT5G44640">
    <property type="gene designation" value="BGLU13"/>
</dbReference>
<dbReference type="eggNOG" id="KOG0626">
    <property type="taxonomic scope" value="Eukaryota"/>
</dbReference>
<dbReference type="HOGENOM" id="CLU_001859_1_0_1"/>
<dbReference type="InParanoid" id="Q9LU02"/>
<dbReference type="OMA" id="DICFKHY"/>
<dbReference type="PhylomeDB" id="Q9LU02"/>
<dbReference type="BioCyc" id="ARA:AT5G44640-MONOMER"/>
<dbReference type="PRO" id="PR:Q9LU02"/>
<dbReference type="Proteomes" id="UP000006548">
    <property type="component" value="Chromosome 5"/>
</dbReference>
<dbReference type="ExpressionAtlas" id="Q9LU02">
    <property type="expression patterns" value="baseline and differential"/>
</dbReference>
<dbReference type="GO" id="GO:0005794">
    <property type="term" value="C:Golgi apparatus"/>
    <property type="evidence" value="ECO:0007005"/>
    <property type="project" value="TAIR"/>
</dbReference>
<dbReference type="GO" id="GO:0008422">
    <property type="term" value="F:beta-glucosidase activity"/>
    <property type="evidence" value="ECO:0007669"/>
    <property type="project" value="UniProtKB-EC"/>
</dbReference>
<dbReference type="GO" id="GO:0005975">
    <property type="term" value="P:carbohydrate metabolic process"/>
    <property type="evidence" value="ECO:0007669"/>
    <property type="project" value="InterPro"/>
</dbReference>
<dbReference type="FunFam" id="3.20.20.80:FF:000022">
    <property type="entry name" value="Beta-glucosidase 11"/>
    <property type="match status" value="1"/>
</dbReference>
<dbReference type="Gene3D" id="3.20.20.80">
    <property type="entry name" value="Glycosidases"/>
    <property type="match status" value="1"/>
</dbReference>
<dbReference type="InterPro" id="IPR001360">
    <property type="entry name" value="Glyco_hydro_1"/>
</dbReference>
<dbReference type="InterPro" id="IPR033132">
    <property type="entry name" value="Glyco_hydro_1_N_CS"/>
</dbReference>
<dbReference type="InterPro" id="IPR017853">
    <property type="entry name" value="Glycoside_hydrolase_SF"/>
</dbReference>
<dbReference type="PANTHER" id="PTHR10353:SF237">
    <property type="entry name" value="BETA-GLUCOSIDASE 12-RELATED"/>
    <property type="match status" value="1"/>
</dbReference>
<dbReference type="PANTHER" id="PTHR10353">
    <property type="entry name" value="GLYCOSYL HYDROLASE"/>
    <property type="match status" value="1"/>
</dbReference>
<dbReference type="Pfam" id="PF00232">
    <property type="entry name" value="Glyco_hydro_1"/>
    <property type="match status" value="1"/>
</dbReference>
<dbReference type="PRINTS" id="PR00131">
    <property type="entry name" value="GLHYDRLASE1"/>
</dbReference>
<dbReference type="SUPFAM" id="SSF51445">
    <property type="entry name" value="(Trans)glycosidases"/>
    <property type="match status" value="1"/>
</dbReference>
<dbReference type="PROSITE" id="PS00653">
    <property type="entry name" value="GLYCOSYL_HYDROL_F1_2"/>
    <property type="match status" value="1"/>
</dbReference>
<feature type="signal peptide" evidence="5">
    <location>
        <begin position="1"/>
        <end position="22"/>
    </location>
</feature>
<feature type="chain" id="PRO_0000389576" description="Beta-glucosidase 13">
    <location>
        <begin position="23"/>
        <end position="507"/>
    </location>
</feature>
<feature type="active site" description="Proton donor" evidence="3">
    <location>
        <position position="200"/>
    </location>
</feature>
<feature type="active site" description="Nucleophile" evidence="3">
    <location>
        <position position="414"/>
    </location>
</feature>
<feature type="binding site" evidence="3">
    <location>
        <position position="50"/>
    </location>
    <ligand>
        <name>a beta-D-glucoside</name>
        <dbReference type="ChEBI" id="CHEBI:22798"/>
    </ligand>
</feature>
<feature type="binding site" evidence="3">
    <location>
        <position position="154"/>
    </location>
    <ligand>
        <name>a beta-D-glucoside</name>
        <dbReference type="ChEBI" id="CHEBI:22798"/>
    </ligand>
</feature>
<feature type="binding site" evidence="3">
    <location>
        <begin position="199"/>
        <end position="200"/>
    </location>
    <ligand>
        <name>a beta-D-glucoside</name>
        <dbReference type="ChEBI" id="CHEBI:22798"/>
    </ligand>
</feature>
<feature type="binding site" evidence="3">
    <location>
        <position position="344"/>
    </location>
    <ligand>
        <name>a beta-D-glucoside</name>
        <dbReference type="ChEBI" id="CHEBI:22798"/>
    </ligand>
</feature>
<feature type="binding site" evidence="4">
    <location>
        <position position="414"/>
    </location>
    <ligand>
        <name>a beta-D-glucoside</name>
        <dbReference type="ChEBI" id="CHEBI:22798"/>
    </ligand>
</feature>
<feature type="binding site" evidence="3">
    <location>
        <position position="459"/>
    </location>
    <ligand>
        <name>a beta-D-glucoside</name>
        <dbReference type="ChEBI" id="CHEBI:22798"/>
    </ligand>
</feature>
<feature type="binding site" evidence="3">
    <location>
        <begin position="466"/>
        <end position="467"/>
    </location>
    <ligand>
        <name>a beta-D-glucoside</name>
        <dbReference type="ChEBI" id="CHEBI:22798"/>
    </ligand>
</feature>
<feature type="binding site" evidence="2">
    <location>
        <position position="475"/>
    </location>
    <ligand>
        <name>a beta-D-glucoside</name>
        <dbReference type="ChEBI" id="CHEBI:22798"/>
    </ligand>
</feature>
<feature type="glycosylation site" description="N-linked (GlcNAc...) asparagine" evidence="6">
    <location>
        <position position="81"/>
    </location>
</feature>
<feature type="glycosylation site" description="N-linked (GlcNAc...) asparagine" evidence="6">
    <location>
        <position position="226"/>
    </location>
</feature>
<feature type="glycosylation site" description="N-linked (GlcNAc...) asparagine" evidence="6">
    <location>
        <position position="358"/>
    </location>
</feature>
<feature type="disulfide bond" evidence="3">
    <location>
        <begin position="219"/>
        <end position="227"/>
    </location>
</feature>
<protein>
    <recommendedName>
        <fullName evidence="7">Beta-glucosidase 13</fullName>
        <shortName evidence="7">AtBGLU13</shortName>
        <ecNumber evidence="1">3.2.1.21</ecNumber>
    </recommendedName>
</protein>